<comment type="similarity">
    <text evidence="1">Belongs to the eukaryotic ribosomal protein eL40 family.</text>
</comment>
<comment type="sequence caution" evidence="2">
    <conflict type="erroneous initiation">
        <sequence resource="EMBL-CDS" id="AAM07320"/>
    </conflict>
</comment>
<sequence length="49" mass="5589">MARFPEAEERLLNKKICMKCNARNAIRATRCRKCGYGTLRVKSKESKGA</sequence>
<dbReference type="EMBL" id="AE010299">
    <property type="protein sequence ID" value="AAM07320.1"/>
    <property type="status" value="ALT_INIT"/>
    <property type="molecule type" value="Genomic_DNA"/>
</dbReference>
<dbReference type="RefSeq" id="WP_048065861.1">
    <property type="nucleotide sequence ID" value="NC_003552.1"/>
</dbReference>
<dbReference type="SMR" id="Q8TJ19"/>
<dbReference type="FunCoup" id="Q8TJ19">
    <property type="interactions" value="63"/>
</dbReference>
<dbReference type="STRING" id="188937.MA_3970"/>
<dbReference type="EnsemblBacteria" id="AAM07320">
    <property type="protein sequence ID" value="AAM07320"/>
    <property type="gene ID" value="MA_3970"/>
</dbReference>
<dbReference type="GeneID" id="1475863"/>
<dbReference type="KEGG" id="mac:MA_3970"/>
<dbReference type="HOGENOM" id="CLU_205640_0_0_2"/>
<dbReference type="InParanoid" id="Q8TJ19"/>
<dbReference type="OrthoDB" id="45138at2157"/>
<dbReference type="PhylomeDB" id="Q8TJ19"/>
<dbReference type="Proteomes" id="UP000002487">
    <property type="component" value="Chromosome"/>
</dbReference>
<dbReference type="GO" id="GO:1990904">
    <property type="term" value="C:ribonucleoprotein complex"/>
    <property type="evidence" value="ECO:0007669"/>
    <property type="project" value="UniProtKB-KW"/>
</dbReference>
<dbReference type="GO" id="GO:0005840">
    <property type="term" value="C:ribosome"/>
    <property type="evidence" value="ECO:0007669"/>
    <property type="project" value="UniProtKB-KW"/>
</dbReference>
<dbReference type="GO" id="GO:0003735">
    <property type="term" value="F:structural constituent of ribosome"/>
    <property type="evidence" value="ECO:0007669"/>
    <property type="project" value="InterPro"/>
</dbReference>
<dbReference type="GO" id="GO:0006412">
    <property type="term" value="P:translation"/>
    <property type="evidence" value="ECO:0007669"/>
    <property type="project" value="UniProtKB-UniRule"/>
</dbReference>
<dbReference type="Gene3D" id="4.10.1060.50">
    <property type="match status" value="1"/>
</dbReference>
<dbReference type="HAMAP" id="MF_00788">
    <property type="entry name" value="Ribosomal_eL40"/>
    <property type="match status" value="1"/>
</dbReference>
<dbReference type="InterPro" id="IPR023657">
    <property type="entry name" value="Ribosomal_eL40_arc"/>
</dbReference>
<dbReference type="InterPro" id="IPR001975">
    <property type="entry name" value="Ribosomal_eL40_dom"/>
</dbReference>
<dbReference type="InterPro" id="IPR038587">
    <property type="entry name" value="Ribosomal_eL40_sf"/>
</dbReference>
<dbReference type="InterPro" id="IPR011332">
    <property type="entry name" value="Ribosomal_zn-bd"/>
</dbReference>
<dbReference type="NCBIfam" id="NF003161">
    <property type="entry name" value="PRK04136.1"/>
    <property type="match status" value="1"/>
</dbReference>
<dbReference type="PANTHER" id="PTHR39649">
    <property type="entry name" value="50S RIBOSOMAL PROTEIN L40E"/>
    <property type="match status" value="1"/>
</dbReference>
<dbReference type="PANTHER" id="PTHR39649:SF1">
    <property type="entry name" value="LARGE RIBOSOMAL SUBUNIT PROTEIN EL40"/>
    <property type="match status" value="1"/>
</dbReference>
<dbReference type="Pfam" id="PF01020">
    <property type="entry name" value="Ribosomal_L40e"/>
    <property type="match status" value="1"/>
</dbReference>
<dbReference type="SMART" id="SM01377">
    <property type="entry name" value="Ribosomal_L40e"/>
    <property type="match status" value="1"/>
</dbReference>
<dbReference type="SUPFAM" id="SSF57829">
    <property type="entry name" value="Zn-binding ribosomal proteins"/>
    <property type="match status" value="1"/>
</dbReference>
<gene>
    <name evidence="1" type="primary">rpl40e</name>
    <name type="ordered locus">MA_3970</name>
</gene>
<name>RL40_METAC</name>
<proteinExistence type="inferred from homology"/>
<organism>
    <name type="scientific">Methanosarcina acetivorans (strain ATCC 35395 / DSM 2834 / JCM 12185 / C2A)</name>
    <dbReference type="NCBI Taxonomy" id="188937"/>
    <lineage>
        <taxon>Archaea</taxon>
        <taxon>Methanobacteriati</taxon>
        <taxon>Methanobacteriota</taxon>
        <taxon>Stenosarchaea group</taxon>
        <taxon>Methanomicrobia</taxon>
        <taxon>Methanosarcinales</taxon>
        <taxon>Methanosarcinaceae</taxon>
        <taxon>Methanosarcina</taxon>
    </lineage>
</organism>
<protein>
    <recommendedName>
        <fullName evidence="1">Large ribosomal subunit protein eL40</fullName>
    </recommendedName>
    <alternativeName>
        <fullName evidence="2">50S ribosomal protein L40e</fullName>
    </alternativeName>
</protein>
<evidence type="ECO:0000255" key="1">
    <source>
        <dbReference type="HAMAP-Rule" id="MF_00788"/>
    </source>
</evidence>
<evidence type="ECO:0000305" key="2"/>
<reference key="1">
    <citation type="journal article" date="2002" name="Genome Res.">
        <title>The genome of Methanosarcina acetivorans reveals extensive metabolic and physiological diversity.</title>
        <authorList>
            <person name="Galagan J.E."/>
            <person name="Nusbaum C."/>
            <person name="Roy A."/>
            <person name="Endrizzi M.G."/>
            <person name="Macdonald P."/>
            <person name="FitzHugh W."/>
            <person name="Calvo S."/>
            <person name="Engels R."/>
            <person name="Smirnov S."/>
            <person name="Atnoor D."/>
            <person name="Brown A."/>
            <person name="Allen N."/>
            <person name="Naylor J."/>
            <person name="Stange-Thomann N."/>
            <person name="DeArellano K."/>
            <person name="Johnson R."/>
            <person name="Linton L."/>
            <person name="McEwan P."/>
            <person name="McKernan K."/>
            <person name="Talamas J."/>
            <person name="Tirrell A."/>
            <person name="Ye W."/>
            <person name="Zimmer A."/>
            <person name="Barber R.D."/>
            <person name="Cann I."/>
            <person name="Graham D.E."/>
            <person name="Grahame D.A."/>
            <person name="Guss A.M."/>
            <person name="Hedderich R."/>
            <person name="Ingram-Smith C."/>
            <person name="Kuettner H.C."/>
            <person name="Krzycki J.A."/>
            <person name="Leigh J.A."/>
            <person name="Li W."/>
            <person name="Liu J."/>
            <person name="Mukhopadhyay B."/>
            <person name="Reeve J.N."/>
            <person name="Smith K."/>
            <person name="Springer T.A."/>
            <person name="Umayam L.A."/>
            <person name="White O."/>
            <person name="White R.H."/>
            <person name="de Macario E.C."/>
            <person name="Ferry J.G."/>
            <person name="Jarrell K.F."/>
            <person name="Jing H."/>
            <person name="Macario A.J.L."/>
            <person name="Paulsen I.T."/>
            <person name="Pritchett M."/>
            <person name="Sowers K.R."/>
            <person name="Swanson R.V."/>
            <person name="Zinder S.H."/>
            <person name="Lander E."/>
            <person name="Metcalf W.W."/>
            <person name="Birren B."/>
        </authorList>
    </citation>
    <scope>NUCLEOTIDE SEQUENCE [LARGE SCALE GENOMIC DNA]</scope>
    <source>
        <strain>ATCC 35395 / DSM 2834 / JCM 12185 / C2A</strain>
    </source>
</reference>
<accession>Q8TJ19</accession>
<feature type="chain" id="PRO_0000138780" description="Large ribosomal subunit protein eL40">
    <location>
        <begin position="1"/>
        <end position="49"/>
    </location>
</feature>
<keyword id="KW-1185">Reference proteome</keyword>
<keyword id="KW-0687">Ribonucleoprotein</keyword>
<keyword id="KW-0689">Ribosomal protein</keyword>